<organism>
    <name type="scientific">Aromatoleum aromaticum (strain DSM 19018 / LMG 30748 / EbN1)</name>
    <name type="common">Azoarcus sp. (strain EbN1)</name>
    <dbReference type="NCBI Taxonomy" id="76114"/>
    <lineage>
        <taxon>Bacteria</taxon>
        <taxon>Pseudomonadati</taxon>
        <taxon>Pseudomonadota</taxon>
        <taxon>Betaproteobacteria</taxon>
        <taxon>Rhodocyclales</taxon>
        <taxon>Rhodocyclaceae</taxon>
        <taxon>Aromatoleum</taxon>
    </lineage>
</organism>
<accession>Q5P236</accession>
<dbReference type="EC" id="3.5.4.13" evidence="1"/>
<dbReference type="EMBL" id="CR555306">
    <property type="protein sequence ID" value="CAI08628.1"/>
    <property type="molecule type" value="Genomic_DNA"/>
</dbReference>
<dbReference type="RefSeq" id="WP_011238314.1">
    <property type="nucleotide sequence ID" value="NC_006513.1"/>
</dbReference>
<dbReference type="SMR" id="Q5P236"/>
<dbReference type="STRING" id="76114.ebA4412"/>
<dbReference type="KEGG" id="eba:ebA4412"/>
<dbReference type="eggNOG" id="COG0717">
    <property type="taxonomic scope" value="Bacteria"/>
</dbReference>
<dbReference type="HOGENOM" id="CLU_087476_4_0_4"/>
<dbReference type="OrthoDB" id="9780956at2"/>
<dbReference type="UniPathway" id="UPA00610">
    <property type="reaction ID" value="UER00665"/>
</dbReference>
<dbReference type="Proteomes" id="UP000006552">
    <property type="component" value="Chromosome"/>
</dbReference>
<dbReference type="GO" id="GO:0008829">
    <property type="term" value="F:dCTP deaminase activity"/>
    <property type="evidence" value="ECO:0007669"/>
    <property type="project" value="UniProtKB-UniRule"/>
</dbReference>
<dbReference type="GO" id="GO:0000166">
    <property type="term" value="F:nucleotide binding"/>
    <property type="evidence" value="ECO:0007669"/>
    <property type="project" value="UniProtKB-KW"/>
</dbReference>
<dbReference type="GO" id="GO:0006226">
    <property type="term" value="P:dUMP biosynthetic process"/>
    <property type="evidence" value="ECO:0007669"/>
    <property type="project" value="UniProtKB-UniPathway"/>
</dbReference>
<dbReference type="GO" id="GO:0006229">
    <property type="term" value="P:dUTP biosynthetic process"/>
    <property type="evidence" value="ECO:0007669"/>
    <property type="project" value="UniProtKB-UniRule"/>
</dbReference>
<dbReference type="GO" id="GO:0015949">
    <property type="term" value="P:nucleobase-containing small molecule interconversion"/>
    <property type="evidence" value="ECO:0007669"/>
    <property type="project" value="TreeGrafter"/>
</dbReference>
<dbReference type="CDD" id="cd07557">
    <property type="entry name" value="trimeric_dUTPase"/>
    <property type="match status" value="1"/>
</dbReference>
<dbReference type="FunFam" id="2.70.40.10:FF:000001">
    <property type="entry name" value="dCTP deaminase"/>
    <property type="match status" value="1"/>
</dbReference>
<dbReference type="Gene3D" id="2.70.40.10">
    <property type="match status" value="1"/>
</dbReference>
<dbReference type="HAMAP" id="MF_00146">
    <property type="entry name" value="dCTP_deaminase"/>
    <property type="match status" value="1"/>
</dbReference>
<dbReference type="InterPro" id="IPR011962">
    <property type="entry name" value="dCTP_deaminase"/>
</dbReference>
<dbReference type="InterPro" id="IPR036157">
    <property type="entry name" value="dUTPase-like_sf"/>
</dbReference>
<dbReference type="InterPro" id="IPR033704">
    <property type="entry name" value="dUTPase_trimeric"/>
</dbReference>
<dbReference type="NCBIfam" id="TIGR02274">
    <property type="entry name" value="dCTP_deam"/>
    <property type="match status" value="1"/>
</dbReference>
<dbReference type="PANTHER" id="PTHR42680">
    <property type="entry name" value="DCTP DEAMINASE"/>
    <property type="match status" value="1"/>
</dbReference>
<dbReference type="PANTHER" id="PTHR42680:SF3">
    <property type="entry name" value="DCTP DEAMINASE"/>
    <property type="match status" value="1"/>
</dbReference>
<dbReference type="Pfam" id="PF22769">
    <property type="entry name" value="DCD"/>
    <property type="match status" value="1"/>
</dbReference>
<dbReference type="SUPFAM" id="SSF51283">
    <property type="entry name" value="dUTPase-like"/>
    <property type="match status" value="1"/>
</dbReference>
<comment type="function">
    <text evidence="1">Catalyzes the deamination of dCTP to dUTP.</text>
</comment>
<comment type="catalytic activity">
    <reaction evidence="1">
        <text>dCTP + H2O + H(+) = dUTP + NH4(+)</text>
        <dbReference type="Rhea" id="RHEA:22680"/>
        <dbReference type="ChEBI" id="CHEBI:15377"/>
        <dbReference type="ChEBI" id="CHEBI:15378"/>
        <dbReference type="ChEBI" id="CHEBI:28938"/>
        <dbReference type="ChEBI" id="CHEBI:61481"/>
        <dbReference type="ChEBI" id="CHEBI:61555"/>
        <dbReference type="EC" id="3.5.4.13"/>
    </reaction>
</comment>
<comment type="pathway">
    <text evidence="1">Pyrimidine metabolism; dUMP biosynthesis; dUMP from dCTP (dUTP route): step 1/2.</text>
</comment>
<comment type="subunit">
    <text evidence="1">Homotrimer.</text>
</comment>
<comment type="similarity">
    <text evidence="1">Belongs to the dCTP deaminase family.</text>
</comment>
<reference key="1">
    <citation type="journal article" date="2005" name="Arch. Microbiol.">
        <title>The genome sequence of an anaerobic aromatic-degrading denitrifying bacterium, strain EbN1.</title>
        <authorList>
            <person name="Rabus R."/>
            <person name="Kube M."/>
            <person name="Heider J."/>
            <person name="Beck A."/>
            <person name="Heitmann K."/>
            <person name="Widdel F."/>
            <person name="Reinhardt R."/>
        </authorList>
    </citation>
    <scope>NUCLEOTIDE SEQUENCE [LARGE SCALE GENOMIC DNA]</scope>
    <source>
        <strain>DSM 19018 / LMG 30748 / EbN1</strain>
    </source>
</reference>
<keyword id="KW-0378">Hydrolase</keyword>
<keyword id="KW-0546">Nucleotide metabolism</keyword>
<keyword id="KW-0547">Nucleotide-binding</keyword>
<keyword id="KW-1185">Reference proteome</keyword>
<sequence>MSIKSDKWIRRMAEQQGMIAPFAPELVRHNGTGKIVSYGTSSYGYDVRCANEFKIFTNINSTIVDPKDFDARNFVDFVGDVCIIPPNSFALARTVEYFRIPRNVLTVCLGKSTYARCGIIVNVTPLEPEWEGHVTLEFSNTTPLPAKIYANEGIAQMLFFEADEVCETSYKDRGGKYLGQTGVTLPKI</sequence>
<name>DCD_AROAE</name>
<gene>
    <name evidence="1" type="primary">dcd</name>
    <name type="ordered locus">AZOSEA25030</name>
    <name type="ORF">ebA4412</name>
</gene>
<proteinExistence type="inferred from homology"/>
<protein>
    <recommendedName>
        <fullName evidence="1">dCTP deaminase</fullName>
        <ecNumber evidence="1">3.5.4.13</ecNumber>
    </recommendedName>
    <alternativeName>
        <fullName evidence="1">Deoxycytidine triphosphate deaminase</fullName>
    </alternativeName>
</protein>
<evidence type="ECO:0000255" key="1">
    <source>
        <dbReference type="HAMAP-Rule" id="MF_00146"/>
    </source>
</evidence>
<feature type="chain" id="PRO_1000009680" description="dCTP deaminase">
    <location>
        <begin position="1"/>
        <end position="188"/>
    </location>
</feature>
<feature type="active site" description="Proton donor/acceptor" evidence="1">
    <location>
        <position position="137"/>
    </location>
</feature>
<feature type="binding site" evidence="1">
    <location>
        <begin position="111"/>
        <end position="116"/>
    </location>
    <ligand>
        <name>dCTP</name>
        <dbReference type="ChEBI" id="CHEBI:61481"/>
    </ligand>
</feature>
<feature type="binding site" evidence="1">
    <location>
        <begin position="135"/>
        <end position="137"/>
    </location>
    <ligand>
        <name>dCTP</name>
        <dbReference type="ChEBI" id="CHEBI:61481"/>
    </ligand>
</feature>
<feature type="binding site" evidence="1">
    <location>
        <position position="156"/>
    </location>
    <ligand>
        <name>dCTP</name>
        <dbReference type="ChEBI" id="CHEBI:61481"/>
    </ligand>
</feature>
<feature type="binding site" evidence="1">
    <location>
        <position position="170"/>
    </location>
    <ligand>
        <name>dCTP</name>
        <dbReference type="ChEBI" id="CHEBI:61481"/>
    </ligand>
</feature>
<feature type="binding site" evidence="1">
    <location>
        <position position="180"/>
    </location>
    <ligand>
        <name>dCTP</name>
        <dbReference type="ChEBI" id="CHEBI:61481"/>
    </ligand>
</feature>